<comment type="function">
    <text evidence="1">Allows the formation of correctly charged Gln-tRNA(Gln) through the transamidation of misacylated Glu-tRNA(Gln) in organisms which lack glutaminyl-tRNA synthetase. The reaction takes place in the presence of glutamine and ATP through an activated gamma-phospho-Glu-tRNA(Gln).</text>
</comment>
<comment type="catalytic activity">
    <reaction evidence="1">
        <text>L-glutamyl-tRNA(Gln) + L-glutamine + ATP + H2O = L-glutaminyl-tRNA(Gln) + L-glutamate + ADP + phosphate + H(+)</text>
        <dbReference type="Rhea" id="RHEA:17521"/>
        <dbReference type="Rhea" id="RHEA-COMP:9681"/>
        <dbReference type="Rhea" id="RHEA-COMP:9684"/>
        <dbReference type="ChEBI" id="CHEBI:15377"/>
        <dbReference type="ChEBI" id="CHEBI:15378"/>
        <dbReference type="ChEBI" id="CHEBI:29985"/>
        <dbReference type="ChEBI" id="CHEBI:30616"/>
        <dbReference type="ChEBI" id="CHEBI:43474"/>
        <dbReference type="ChEBI" id="CHEBI:58359"/>
        <dbReference type="ChEBI" id="CHEBI:78520"/>
        <dbReference type="ChEBI" id="CHEBI:78521"/>
        <dbReference type="ChEBI" id="CHEBI:456216"/>
        <dbReference type="EC" id="6.3.5.7"/>
    </reaction>
</comment>
<comment type="subunit">
    <text evidence="1">Heterotrimer of A, B and C subunits.</text>
</comment>
<comment type="similarity">
    <text evidence="1">Belongs to the amidase family. GatA subfamily.</text>
</comment>
<organism>
    <name type="scientific">Cereibacter sphaeroides (strain ATCC 17029 / ATH 2.4.9)</name>
    <name type="common">Rhodobacter sphaeroides</name>
    <dbReference type="NCBI Taxonomy" id="349101"/>
    <lineage>
        <taxon>Bacteria</taxon>
        <taxon>Pseudomonadati</taxon>
        <taxon>Pseudomonadota</taxon>
        <taxon>Alphaproteobacteria</taxon>
        <taxon>Rhodobacterales</taxon>
        <taxon>Paracoccaceae</taxon>
        <taxon>Cereibacter</taxon>
    </lineage>
</organism>
<reference key="1">
    <citation type="submission" date="2007-02" db="EMBL/GenBank/DDBJ databases">
        <title>Complete sequence of chromosome 1 of Rhodobacter sphaeroides ATCC 17029.</title>
        <authorList>
            <person name="Copeland A."/>
            <person name="Lucas S."/>
            <person name="Lapidus A."/>
            <person name="Barry K."/>
            <person name="Detter J.C."/>
            <person name="Glavina del Rio T."/>
            <person name="Hammon N."/>
            <person name="Israni S."/>
            <person name="Dalin E."/>
            <person name="Tice H."/>
            <person name="Pitluck S."/>
            <person name="Kiss H."/>
            <person name="Brettin T."/>
            <person name="Bruce D."/>
            <person name="Han C."/>
            <person name="Tapia R."/>
            <person name="Gilna P."/>
            <person name="Schmutz J."/>
            <person name="Larimer F."/>
            <person name="Land M."/>
            <person name="Hauser L."/>
            <person name="Kyrpides N."/>
            <person name="Mikhailova N."/>
            <person name="Richardson P."/>
            <person name="Mackenzie C."/>
            <person name="Choudhary M."/>
            <person name="Donohue T.J."/>
            <person name="Kaplan S."/>
        </authorList>
    </citation>
    <scope>NUCLEOTIDE SEQUENCE [LARGE SCALE GENOMIC DNA]</scope>
    <source>
        <strain>ATCC 17029 / ATH 2.4.9</strain>
    </source>
</reference>
<sequence>MNANELTIAEARDALARGELSAVDLTMACLTAIDAGTPLNAFVHTTPEIALDQARAADARRGAGAGALNGIPLGIKDLFCTRGVASQAASNILRGFKPEYESTVTSKLFEAGAVMLGKLNMDEFAMGSSNETSCYGDAVNPWKVDDRRLTPGGSSGGSAAAVAADLCLAATGTDTGGSIRQPAAFTGIVGIKPTYGRVSRWGIVAFASSLDQAGPMTKSVRDAAILLGAMAGHDPKDSTSADIPVPDFEAALTGDIRGRKIGIPREYRMEGMPAEIEALWARGREMLADAGAEIVDISLPHTKYALPAYYVIAPAEASSNLARYDGVRYGHRARLGQGDGIVDMYEKTRAEGFGKEVQRRVMIGTYVLSAGFYDAYYNRARKVRALIKRDFDEAFAAGVDAILTPATPSSAFGLGEMADADPVAMYLNDVFTVTVNLAGLPGISVPVGLDAKGLPLGLQLIGRPWDEAGLLNHAHVLERAAGFVEKPRKWW</sequence>
<evidence type="ECO:0000255" key="1">
    <source>
        <dbReference type="HAMAP-Rule" id="MF_00120"/>
    </source>
</evidence>
<gene>
    <name evidence="1" type="primary">gatA</name>
    <name type="ordered locus">Rsph17029_0945</name>
</gene>
<dbReference type="EC" id="6.3.5.7" evidence="1"/>
<dbReference type="EMBL" id="CP000577">
    <property type="protein sequence ID" value="ABN76056.1"/>
    <property type="molecule type" value="Genomic_DNA"/>
</dbReference>
<dbReference type="RefSeq" id="WP_011840706.1">
    <property type="nucleotide sequence ID" value="NC_009049.1"/>
</dbReference>
<dbReference type="SMR" id="A3PI90"/>
<dbReference type="KEGG" id="rsh:Rsph17029_0945"/>
<dbReference type="HOGENOM" id="CLU_009600_0_3_5"/>
<dbReference type="GO" id="GO:0030956">
    <property type="term" value="C:glutamyl-tRNA(Gln) amidotransferase complex"/>
    <property type="evidence" value="ECO:0007669"/>
    <property type="project" value="InterPro"/>
</dbReference>
<dbReference type="GO" id="GO:0005524">
    <property type="term" value="F:ATP binding"/>
    <property type="evidence" value="ECO:0007669"/>
    <property type="project" value="UniProtKB-KW"/>
</dbReference>
<dbReference type="GO" id="GO:0050567">
    <property type="term" value="F:glutaminyl-tRNA synthase (glutamine-hydrolyzing) activity"/>
    <property type="evidence" value="ECO:0007669"/>
    <property type="project" value="UniProtKB-UniRule"/>
</dbReference>
<dbReference type="GO" id="GO:0006412">
    <property type="term" value="P:translation"/>
    <property type="evidence" value="ECO:0007669"/>
    <property type="project" value="UniProtKB-UniRule"/>
</dbReference>
<dbReference type="Gene3D" id="3.90.1300.10">
    <property type="entry name" value="Amidase signature (AS) domain"/>
    <property type="match status" value="1"/>
</dbReference>
<dbReference type="HAMAP" id="MF_00120">
    <property type="entry name" value="GatA"/>
    <property type="match status" value="1"/>
</dbReference>
<dbReference type="InterPro" id="IPR000120">
    <property type="entry name" value="Amidase"/>
</dbReference>
<dbReference type="InterPro" id="IPR020556">
    <property type="entry name" value="Amidase_CS"/>
</dbReference>
<dbReference type="InterPro" id="IPR023631">
    <property type="entry name" value="Amidase_dom"/>
</dbReference>
<dbReference type="InterPro" id="IPR036928">
    <property type="entry name" value="AS_sf"/>
</dbReference>
<dbReference type="InterPro" id="IPR004412">
    <property type="entry name" value="GatA"/>
</dbReference>
<dbReference type="NCBIfam" id="TIGR00132">
    <property type="entry name" value="gatA"/>
    <property type="match status" value="1"/>
</dbReference>
<dbReference type="PANTHER" id="PTHR11895:SF151">
    <property type="entry name" value="GLUTAMYL-TRNA(GLN) AMIDOTRANSFERASE SUBUNIT A"/>
    <property type="match status" value="1"/>
</dbReference>
<dbReference type="PANTHER" id="PTHR11895">
    <property type="entry name" value="TRANSAMIDASE"/>
    <property type="match status" value="1"/>
</dbReference>
<dbReference type="Pfam" id="PF01425">
    <property type="entry name" value="Amidase"/>
    <property type="match status" value="1"/>
</dbReference>
<dbReference type="SUPFAM" id="SSF75304">
    <property type="entry name" value="Amidase signature (AS) enzymes"/>
    <property type="match status" value="1"/>
</dbReference>
<dbReference type="PROSITE" id="PS00571">
    <property type="entry name" value="AMIDASES"/>
    <property type="match status" value="1"/>
</dbReference>
<accession>A3PI90</accession>
<protein>
    <recommendedName>
        <fullName evidence="1">Glutamyl-tRNA(Gln) amidotransferase subunit A</fullName>
        <shortName evidence="1">Glu-ADT subunit A</shortName>
        <ecNumber evidence="1">6.3.5.7</ecNumber>
    </recommendedName>
</protein>
<keyword id="KW-0067">ATP-binding</keyword>
<keyword id="KW-0436">Ligase</keyword>
<keyword id="KW-0547">Nucleotide-binding</keyword>
<keyword id="KW-0648">Protein biosynthesis</keyword>
<name>GATA_CERS1</name>
<proteinExistence type="inferred from homology"/>
<feature type="chain" id="PRO_1000015895" description="Glutamyl-tRNA(Gln) amidotransferase subunit A">
    <location>
        <begin position="1"/>
        <end position="491"/>
    </location>
</feature>
<feature type="active site" description="Charge relay system" evidence="1">
    <location>
        <position position="76"/>
    </location>
</feature>
<feature type="active site" description="Charge relay system" evidence="1">
    <location>
        <position position="154"/>
    </location>
</feature>
<feature type="active site" description="Acyl-ester intermediate" evidence="1">
    <location>
        <position position="178"/>
    </location>
</feature>